<organism>
    <name type="scientific">Mus musculus</name>
    <name type="common">Mouse</name>
    <dbReference type="NCBI Taxonomy" id="10090"/>
    <lineage>
        <taxon>Eukaryota</taxon>
        <taxon>Metazoa</taxon>
        <taxon>Chordata</taxon>
        <taxon>Craniata</taxon>
        <taxon>Vertebrata</taxon>
        <taxon>Euteleostomi</taxon>
        <taxon>Mammalia</taxon>
        <taxon>Eutheria</taxon>
        <taxon>Euarchontoglires</taxon>
        <taxon>Glires</taxon>
        <taxon>Rodentia</taxon>
        <taxon>Myomorpha</taxon>
        <taxon>Muroidea</taxon>
        <taxon>Muridae</taxon>
        <taxon>Murinae</taxon>
        <taxon>Mus</taxon>
        <taxon>Mus</taxon>
    </lineage>
</organism>
<reference key="1">
    <citation type="submission" date="1997-07" db="EMBL/GenBank/DDBJ databases">
        <authorList>
            <person name="Tevelev A."/>
            <person name="Schatz D.G."/>
        </authorList>
    </citation>
    <scope>NUCLEOTIDE SEQUENCE [MRNA]</scope>
</reference>
<reference key="2">
    <citation type="journal article" date="2004" name="Genome Res.">
        <title>The status, quality, and expansion of the NIH full-length cDNA project: the Mammalian Gene Collection (MGC).</title>
        <authorList>
            <consortium name="The MGC Project Team"/>
        </authorList>
    </citation>
    <scope>NUCLEOTIDE SEQUENCE [LARGE SCALE MRNA]</scope>
</reference>
<reference key="3">
    <citation type="journal article" date="2005" name="Genes Cells">
        <title>Smicl is a novel Smad interacting protein and cleavage and polyadenylation specificity factor associated protein.</title>
        <authorList>
            <person name="Collart C."/>
            <person name="Remacle J.E."/>
            <person name="Barabino S."/>
            <person name="van Grunsven L.A."/>
            <person name="Nelles L."/>
            <person name="Schellens A."/>
            <person name="Van de Putte T."/>
            <person name="Pype S."/>
            <person name="Huylebroeck D."/>
            <person name="Verschueren K."/>
        </authorList>
    </citation>
    <scope>INTERACTION WITH ZC3H3</scope>
</reference>
<reference key="4">
    <citation type="journal article" date="2007" name="J. Proteome Res.">
        <title>A differential phosphoproteomic analysis of retinoic acid-treated P19 cells.</title>
        <authorList>
            <person name="Smith J.C."/>
            <person name="Duchesne M.A."/>
            <person name="Tozzi P."/>
            <person name="Ethier M."/>
            <person name="Figeys D."/>
        </authorList>
    </citation>
    <scope>PHOSPHORYLATION [LARGE SCALE ANALYSIS] AT SER-423</scope>
    <scope>IDENTIFICATION BY MASS SPECTROMETRY [LARGE SCALE ANALYSIS]</scope>
    <source>
        <tissue>Teratocarcinoma</tissue>
    </source>
</reference>
<reference key="5">
    <citation type="journal article" date="2007" name="Proc. Natl. Acad. Sci. U.S.A.">
        <title>Large-scale phosphorylation analysis of mouse liver.</title>
        <authorList>
            <person name="Villen J."/>
            <person name="Beausoleil S.A."/>
            <person name="Gerber S.A."/>
            <person name="Gygi S.P."/>
        </authorList>
    </citation>
    <scope>PHOSPHORYLATION [LARGE SCALE ANALYSIS] AT SER-419; SER-420 AND SER-423</scope>
    <scope>IDENTIFICATION BY MASS SPECTROMETRY [LARGE SCALE ANALYSIS]</scope>
    <source>
        <tissue>Liver</tissue>
    </source>
</reference>
<reference key="6">
    <citation type="journal article" date="2010" name="Cell">
        <title>A tissue-specific atlas of mouse protein phosphorylation and expression.</title>
        <authorList>
            <person name="Huttlin E.L."/>
            <person name="Jedrychowski M.P."/>
            <person name="Elias J.E."/>
            <person name="Goswami T."/>
            <person name="Rad R."/>
            <person name="Beausoleil S.A."/>
            <person name="Villen J."/>
            <person name="Haas W."/>
            <person name="Sowa M.E."/>
            <person name="Gygi S.P."/>
        </authorList>
    </citation>
    <scope>PHOSPHORYLATION [LARGE SCALE ANALYSIS] AT SER-419; SER-420 AND SER-423</scope>
    <scope>IDENTIFICATION BY MASS SPECTROMETRY [LARGE SCALE ANALYSIS]</scope>
    <source>
        <tissue>Kidney</tissue>
        <tissue>Liver</tissue>
        <tissue>Lung</tissue>
        <tissue>Spleen</tissue>
        <tissue>Testis</tissue>
    </source>
</reference>
<comment type="function">
    <text evidence="1">Component of the cleavage and polyadenylation specificity factor (CPSF) complex that play a key role in pre-mRNA 3'-end formation, recognizing the AAUAAA signal sequence and interacting with poly(A) polymerase and other factors to bring about cleavage and poly(A) addition. Involved in the histone 3' end pre-mRNA processing (By similarity).</text>
</comment>
<comment type="subunit">
    <text evidence="2 4">Component of the cleavage and polyadenylation specificity factor (CPSF) complex, composed of CPSF1, CPSF2, CPSF3, CPSF4 and FIP1L1. Interacts with CPSF3, CSTF2 and SYMPK (By similarity). Interacts with ZC3H3 (PubMed:16115198).</text>
</comment>
<comment type="subcellular location">
    <subcellularLocation>
        <location evidence="5">Nucleus</location>
    </subcellularLocation>
</comment>
<comment type="similarity">
    <text evidence="5">Belongs to the metallo-beta-lactamase superfamily. RNA-metabolizing metallo-beta-lactamase-like family. CPSF2/YSH1 subfamily.</text>
</comment>
<feature type="chain" id="PRO_0000074394" description="Cleavage and polyadenylation specificity factor subunit 2">
    <location>
        <begin position="1"/>
        <end position="782"/>
    </location>
</feature>
<feature type="region of interest" description="Disordered" evidence="3">
    <location>
        <begin position="407"/>
        <end position="449"/>
    </location>
</feature>
<feature type="compositionally biased region" description="Basic and acidic residues" evidence="3">
    <location>
        <begin position="407"/>
        <end position="416"/>
    </location>
</feature>
<feature type="compositionally biased region" description="Acidic residues" evidence="3">
    <location>
        <begin position="417"/>
        <end position="430"/>
    </location>
</feature>
<feature type="compositionally biased region" description="Basic and acidic residues" evidence="3">
    <location>
        <begin position="439"/>
        <end position="449"/>
    </location>
</feature>
<feature type="modified residue" description="Phosphoserine" evidence="6 8">
    <location>
        <position position="419"/>
    </location>
</feature>
<feature type="modified residue" description="Phosphoserine" evidence="6 8">
    <location>
        <position position="420"/>
    </location>
</feature>
<feature type="modified residue" description="Phosphoserine" evidence="6 7 8">
    <location>
        <position position="423"/>
    </location>
</feature>
<feature type="modified residue" description="Phosphoserine" evidence="2">
    <location>
        <position position="660"/>
    </location>
</feature>
<accession>O35218</accession>
<gene>
    <name type="primary">Cpsf2</name>
    <name type="synonym">Cpsf100</name>
    <name type="synonym">Mcpsf</name>
</gene>
<sequence>MTSIIKLTTLSGVQEESALCYLLQVDEFRFLLDCGWDEHFSVDIIDSLRKHVHQIDAVLLSHPDPLHLGALPFAVGKLGLNCAIYATIPVYKMGQMFMYDLYQSRHNTEDFTLFTLDDVDAAFDKIQQLKFSQIVNLKGKGHGLSITPLPAGHMIGGTIWKIVKDGEEEIVYAVDFNHKREIHLNGCSLEMLSRPSLLITDSFNATYVQPRRKQRDEQLLTNVLETLRGDGNVLIAVDTAGRVLELAQLLDQIWRTKDAGLGVYSLALLNNVSYNVVEFSKSQVEWMSDKLMRCFEDKRNNPFQFRHLSLCHGLSDLARVPSPKVVLASQPDLECGFSRDLFIQWCQDPKNSIILTYRTTPGTLARFLIDNPTEKVTEIELRKRVKLEGKELEEYVEKEKLKKEAAKKLEQSKEADIDSSDESDVEEDVDQPSAHKTKHDLMMKGEGSRKGSFFKQAKKSYPMFPAPEERIKWDEYGEIIKPEDFLVPELQATEEEKSKLESGLTNGEEPMDQDLSDVPTKCVSATESIEIKARVTYIDYEGRSDGDSIKKIINQMKPRQLIIVHGPPEASQDLAECCRAFGGKDIKVYMPKLHETVDATSETHIYQVRLKDSLVSSLQFCKAKDAELAWIDGVLDMRVSKVDTGVILEEGELKDDGEDSEMQVDAPSDSSAMAQQKAMKSLFGEDEKELGEETEIIPTLEPLPPHEVPGHQSVFMNEPRLSDFKQVLLREGIQAEFVGGVLVCNNQVAVRRTETGRIGLEGCLCQDFYRIRDLLYEQYAIV</sequence>
<evidence type="ECO:0000250" key="1"/>
<evidence type="ECO:0000250" key="2">
    <source>
        <dbReference type="UniProtKB" id="Q9P2I0"/>
    </source>
</evidence>
<evidence type="ECO:0000256" key="3">
    <source>
        <dbReference type="SAM" id="MobiDB-lite"/>
    </source>
</evidence>
<evidence type="ECO:0000269" key="4">
    <source>
    </source>
</evidence>
<evidence type="ECO:0000305" key="5"/>
<evidence type="ECO:0007744" key="6">
    <source>
    </source>
</evidence>
<evidence type="ECO:0007744" key="7">
    <source>
    </source>
</evidence>
<evidence type="ECO:0007744" key="8">
    <source>
    </source>
</evidence>
<proteinExistence type="evidence at protein level"/>
<name>CPSF2_MOUSE</name>
<keyword id="KW-0507">mRNA processing</keyword>
<keyword id="KW-0539">Nucleus</keyword>
<keyword id="KW-0597">Phosphoprotein</keyword>
<keyword id="KW-1185">Reference proteome</keyword>
<keyword id="KW-0694">RNA-binding</keyword>
<dbReference type="EMBL" id="AF012822">
    <property type="protein sequence ID" value="AAB66830.1"/>
    <property type="molecule type" value="mRNA"/>
</dbReference>
<dbReference type="EMBL" id="BC013628">
    <property type="protein sequence ID" value="AAH13628.1"/>
    <property type="molecule type" value="mRNA"/>
</dbReference>
<dbReference type="EMBL" id="BC007163">
    <property type="protein sequence ID" value="AAH07163.1"/>
    <property type="molecule type" value="mRNA"/>
</dbReference>
<dbReference type="CCDS" id="CCDS26116.1"/>
<dbReference type="RefSeq" id="NP_058552.1">
    <property type="nucleotide sequence ID" value="NM_016856.3"/>
</dbReference>
<dbReference type="RefSeq" id="XP_006516134.1">
    <property type="nucleotide sequence ID" value="XM_006516071.5"/>
</dbReference>
<dbReference type="SMR" id="O35218"/>
<dbReference type="BioGRID" id="206172">
    <property type="interactions" value="14"/>
</dbReference>
<dbReference type="FunCoup" id="O35218">
    <property type="interactions" value="3158"/>
</dbReference>
<dbReference type="IntAct" id="O35218">
    <property type="interactions" value="2"/>
</dbReference>
<dbReference type="MINT" id="O35218"/>
<dbReference type="STRING" id="10090.ENSMUSP00000047797"/>
<dbReference type="iPTMnet" id="O35218"/>
<dbReference type="PhosphoSitePlus" id="O35218"/>
<dbReference type="SwissPalm" id="O35218"/>
<dbReference type="jPOST" id="O35218"/>
<dbReference type="PaxDb" id="10090-ENSMUSP00000047797"/>
<dbReference type="PeptideAtlas" id="O35218"/>
<dbReference type="ProteomicsDB" id="284002"/>
<dbReference type="Pumba" id="O35218"/>
<dbReference type="Antibodypedia" id="81">
    <property type="antibodies" value="121 antibodies from 25 providers"/>
</dbReference>
<dbReference type="DNASU" id="51786"/>
<dbReference type="Ensembl" id="ENSMUST00000047357.10">
    <property type="protein sequence ID" value="ENSMUSP00000047797.9"/>
    <property type="gene ID" value="ENSMUSG00000041781.10"/>
</dbReference>
<dbReference type="GeneID" id="51786"/>
<dbReference type="KEGG" id="mmu:51786"/>
<dbReference type="UCSC" id="uc007otx.2">
    <property type="organism name" value="mouse"/>
</dbReference>
<dbReference type="AGR" id="MGI:1861601"/>
<dbReference type="CTD" id="53981"/>
<dbReference type="MGI" id="MGI:1861601">
    <property type="gene designation" value="Cpsf2"/>
</dbReference>
<dbReference type="VEuPathDB" id="HostDB:ENSMUSG00000041781"/>
<dbReference type="eggNOG" id="KOG1135">
    <property type="taxonomic scope" value="Eukaryota"/>
</dbReference>
<dbReference type="GeneTree" id="ENSGT00910000144260"/>
<dbReference type="HOGENOM" id="CLU_002227_1_1_1"/>
<dbReference type="InParanoid" id="O35218"/>
<dbReference type="OMA" id="QSRHNME"/>
<dbReference type="OrthoDB" id="64353at2759"/>
<dbReference type="PhylomeDB" id="O35218"/>
<dbReference type="TreeFam" id="TF106131"/>
<dbReference type="Reactome" id="R-MMU-159231">
    <property type="pathway name" value="Transport of Mature mRNA Derived from an Intronless Transcript"/>
</dbReference>
<dbReference type="Reactome" id="R-MMU-72187">
    <property type="pathway name" value="mRNA 3'-end processing"/>
</dbReference>
<dbReference type="Reactome" id="R-MMU-72203">
    <property type="pathway name" value="Processing of Capped Intron-Containing Pre-mRNA"/>
</dbReference>
<dbReference type="Reactome" id="R-MMU-73856">
    <property type="pathway name" value="RNA Polymerase II Transcription Termination"/>
</dbReference>
<dbReference type="Reactome" id="R-MMU-77595">
    <property type="pathway name" value="Processing of Intronless Pre-mRNAs"/>
</dbReference>
<dbReference type="BioGRID-ORCS" id="51786">
    <property type="hits" value="28 hits in 75 CRISPR screens"/>
</dbReference>
<dbReference type="ChiTaRS" id="Cpsf2">
    <property type="organism name" value="mouse"/>
</dbReference>
<dbReference type="PRO" id="PR:O35218"/>
<dbReference type="Proteomes" id="UP000000589">
    <property type="component" value="Chromosome 12"/>
</dbReference>
<dbReference type="RNAct" id="O35218">
    <property type="molecule type" value="protein"/>
</dbReference>
<dbReference type="Bgee" id="ENSMUSG00000041781">
    <property type="expression patterns" value="Expressed in ileal epithelium and 249 other cell types or tissues"/>
</dbReference>
<dbReference type="GO" id="GO:0098978">
    <property type="term" value="C:glutamatergic synapse"/>
    <property type="evidence" value="ECO:0000314"/>
    <property type="project" value="SynGO"/>
</dbReference>
<dbReference type="GO" id="GO:0005847">
    <property type="term" value="C:mRNA cleavage and polyadenylation specificity factor complex"/>
    <property type="evidence" value="ECO:0000314"/>
    <property type="project" value="MGI"/>
</dbReference>
<dbReference type="GO" id="GO:0098794">
    <property type="term" value="C:postsynapse"/>
    <property type="evidence" value="ECO:0000314"/>
    <property type="project" value="SynGO"/>
</dbReference>
<dbReference type="GO" id="GO:0003723">
    <property type="term" value="F:RNA binding"/>
    <property type="evidence" value="ECO:0007669"/>
    <property type="project" value="UniProtKB-KW"/>
</dbReference>
<dbReference type="GO" id="GO:0006398">
    <property type="term" value="P:mRNA 3'-end processing by stem-loop binding and cleavage"/>
    <property type="evidence" value="ECO:0000250"/>
    <property type="project" value="UniProtKB"/>
</dbReference>
<dbReference type="CDD" id="cd16293">
    <property type="entry name" value="CPSF2-like_MBL-fold"/>
    <property type="match status" value="1"/>
</dbReference>
<dbReference type="FunFam" id="3.60.15.10:FF:000008">
    <property type="entry name" value="Cleavage and polyadenylation specificity factor subunit 2"/>
    <property type="match status" value="1"/>
</dbReference>
<dbReference type="Gene3D" id="3.60.15.10">
    <property type="entry name" value="Ribonuclease Z/Hydroxyacylglutathione hydrolase-like"/>
    <property type="match status" value="1"/>
</dbReference>
<dbReference type="InterPro" id="IPR022712">
    <property type="entry name" value="Beta_Casp"/>
</dbReference>
<dbReference type="InterPro" id="IPR027075">
    <property type="entry name" value="CPSF2"/>
</dbReference>
<dbReference type="InterPro" id="IPR025069">
    <property type="entry name" value="Cpsf2_C"/>
</dbReference>
<dbReference type="InterPro" id="IPR035639">
    <property type="entry name" value="CPSF2_MBL"/>
</dbReference>
<dbReference type="InterPro" id="IPR001279">
    <property type="entry name" value="Metallo-B-lactamas"/>
</dbReference>
<dbReference type="InterPro" id="IPR036866">
    <property type="entry name" value="RibonucZ/Hydroxyglut_hydro"/>
</dbReference>
<dbReference type="InterPro" id="IPR011108">
    <property type="entry name" value="RMMBL"/>
</dbReference>
<dbReference type="PANTHER" id="PTHR45922">
    <property type="entry name" value="CLEAVAGE AND POLYADENYLATION SPECIFICITY FACTOR SUBUNIT 2"/>
    <property type="match status" value="1"/>
</dbReference>
<dbReference type="PANTHER" id="PTHR45922:SF1">
    <property type="entry name" value="CLEAVAGE AND POLYADENYLATION SPECIFICITY FACTOR SUBUNIT 2"/>
    <property type="match status" value="1"/>
</dbReference>
<dbReference type="Pfam" id="PF10996">
    <property type="entry name" value="Beta-Casp"/>
    <property type="match status" value="1"/>
</dbReference>
<dbReference type="Pfam" id="PF13299">
    <property type="entry name" value="CPSF100_C"/>
    <property type="match status" value="1"/>
</dbReference>
<dbReference type="Pfam" id="PF16661">
    <property type="entry name" value="Lactamase_B_6"/>
    <property type="match status" value="1"/>
</dbReference>
<dbReference type="Pfam" id="PF07521">
    <property type="entry name" value="RMMBL"/>
    <property type="match status" value="1"/>
</dbReference>
<dbReference type="SMART" id="SM01027">
    <property type="entry name" value="Beta-Casp"/>
    <property type="match status" value="1"/>
</dbReference>
<dbReference type="SUPFAM" id="SSF56281">
    <property type="entry name" value="Metallo-hydrolase/oxidoreductase"/>
    <property type="match status" value="1"/>
</dbReference>
<protein>
    <recommendedName>
        <fullName>Cleavage and polyadenylation specificity factor subunit 2</fullName>
    </recommendedName>
    <alternativeName>
        <fullName>Cleavage and polyadenylation specificity factor 100 kDa subunit</fullName>
        <shortName>CPSF 100 kDa subunit</shortName>
    </alternativeName>
</protein>